<evidence type="ECO:0000255" key="1">
    <source>
        <dbReference type="HAMAP-Rule" id="MF_00140"/>
    </source>
</evidence>
<evidence type="ECO:0000305" key="2"/>
<name>SYW_STRPQ</name>
<keyword id="KW-0030">Aminoacyl-tRNA synthetase</keyword>
<keyword id="KW-0067">ATP-binding</keyword>
<keyword id="KW-0963">Cytoplasm</keyword>
<keyword id="KW-0436">Ligase</keyword>
<keyword id="KW-0547">Nucleotide-binding</keyword>
<keyword id="KW-0648">Protein biosynthesis</keyword>
<gene>
    <name evidence="1" type="primary">trpS</name>
    <name type="ordered locus">SPs1854</name>
</gene>
<feature type="chain" id="PRO_0000411620" description="Tryptophan--tRNA ligase">
    <location>
        <begin position="1"/>
        <end position="340"/>
    </location>
</feature>
<feature type="short sequence motif" description="'HIGH' region" evidence="1">
    <location>
        <begin position="12"/>
        <end position="20"/>
    </location>
</feature>
<feature type="short sequence motif" description="'KMSKS' region" evidence="1">
    <location>
        <begin position="202"/>
        <end position="206"/>
    </location>
</feature>
<feature type="binding site" evidence="1">
    <location>
        <begin position="11"/>
        <end position="13"/>
    </location>
    <ligand>
        <name>ATP</name>
        <dbReference type="ChEBI" id="CHEBI:30616"/>
    </ligand>
</feature>
<feature type="binding site" evidence="1">
    <location>
        <begin position="19"/>
        <end position="20"/>
    </location>
    <ligand>
        <name>ATP</name>
        <dbReference type="ChEBI" id="CHEBI:30616"/>
    </ligand>
</feature>
<feature type="binding site" evidence="1">
    <location>
        <position position="140"/>
    </location>
    <ligand>
        <name>L-tryptophan</name>
        <dbReference type="ChEBI" id="CHEBI:57912"/>
    </ligand>
</feature>
<feature type="binding site" evidence="1">
    <location>
        <begin position="152"/>
        <end position="154"/>
    </location>
    <ligand>
        <name>ATP</name>
        <dbReference type="ChEBI" id="CHEBI:30616"/>
    </ligand>
</feature>
<feature type="binding site" evidence="1">
    <location>
        <position position="194"/>
    </location>
    <ligand>
        <name>ATP</name>
        <dbReference type="ChEBI" id="CHEBI:30616"/>
    </ligand>
</feature>
<feature type="binding site" evidence="1">
    <location>
        <begin position="202"/>
        <end position="206"/>
    </location>
    <ligand>
        <name>ATP</name>
        <dbReference type="ChEBI" id="CHEBI:30616"/>
    </ligand>
</feature>
<proteinExistence type="inferred from homology"/>
<sequence length="340" mass="38373">MTKPIILTGDRPTGKLHLGHYVGSLKNRVFLQNENKYKMFVFLADQQALTDHAKESELIQESIGNVALDYLSVGLDPKQSTIFIQSQIPELAELSMYYMNLVSLARLERNPTVKTEIAQKGFGESIPSGFLVYPVSQAADITAFKANLVPVGNDQKPMIEQTREIVRSFNHTYHTDCLVEPEGIYPENEKAGRLPGLDGNAKMSKSLGNGIYLSDDADTVRKKVMSMYTDPNHIKIEDPGQIEGNMVFHYLDIFARKEDQADIEAMKEHYQRGGLGDVKTKRYLLDILERELAPIRERRLEYAKDMGEVFRMLQEGSQKARTVAAKTLSEVKSAMGINYF</sequence>
<reference key="1">
    <citation type="journal article" date="2003" name="Genome Res.">
        <title>Genome sequence of an M3 strain of Streptococcus pyogenes reveals a large-scale genomic rearrangement in invasive strains and new insights into phage evolution.</title>
        <authorList>
            <person name="Nakagawa I."/>
            <person name="Kurokawa K."/>
            <person name="Yamashita A."/>
            <person name="Nakata M."/>
            <person name="Tomiyasu Y."/>
            <person name="Okahashi N."/>
            <person name="Kawabata S."/>
            <person name="Yamazaki K."/>
            <person name="Shiba T."/>
            <person name="Yasunaga T."/>
            <person name="Hayashi H."/>
            <person name="Hattori M."/>
            <person name="Hamada S."/>
        </authorList>
    </citation>
    <scope>NUCLEOTIDE SEQUENCE [LARGE SCALE GENOMIC DNA]</scope>
    <source>
        <strain>SSI-1</strain>
    </source>
</reference>
<dbReference type="EC" id="6.1.1.2" evidence="1"/>
<dbReference type="EMBL" id="BA000034">
    <property type="protein sequence ID" value="BAC64949.1"/>
    <property type="status" value="ALT_INIT"/>
    <property type="molecule type" value="Genomic_DNA"/>
</dbReference>
<dbReference type="RefSeq" id="WP_002991455.1">
    <property type="nucleotide sequence ID" value="NC_004606.1"/>
</dbReference>
<dbReference type="SMR" id="P0DG61"/>
<dbReference type="GeneID" id="69901625"/>
<dbReference type="KEGG" id="sps:SPs1854"/>
<dbReference type="HOGENOM" id="CLU_029244_0_1_9"/>
<dbReference type="GO" id="GO:0005829">
    <property type="term" value="C:cytosol"/>
    <property type="evidence" value="ECO:0007669"/>
    <property type="project" value="TreeGrafter"/>
</dbReference>
<dbReference type="GO" id="GO:0005524">
    <property type="term" value="F:ATP binding"/>
    <property type="evidence" value="ECO:0007669"/>
    <property type="project" value="UniProtKB-UniRule"/>
</dbReference>
<dbReference type="GO" id="GO:0004830">
    <property type="term" value="F:tryptophan-tRNA ligase activity"/>
    <property type="evidence" value="ECO:0007669"/>
    <property type="project" value="UniProtKB-UniRule"/>
</dbReference>
<dbReference type="GO" id="GO:0006436">
    <property type="term" value="P:tryptophanyl-tRNA aminoacylation"/>
    <property type="evidence" value="ECO:0007669"/>
    <property type="project" value="UniProtKB-UniRule"/>
</dbReference>
<dbReference type="CDD" id="cd00806">
    <property type="entry name" value="TrpRS_core"/>
    <property type="match status" value="1"/>
</dbReference>
<dbReference type="FunFam" id="1.10.240.10:FF:000005">
    <property type="entry name" value="Tryptophan--tRNA ligase"/>
    <property type="match status" value="1"/>
</dbReference>
<dbReference type="FunFam" id="3.40.50.620:FF:000094">
    <property type="entry name" value="Tryptophan--tRNA ligase"/>
    <property type="match status" value="1"/>
</dbReference>
<dbReference type="Gene3D" id="3.40.50.620">
    <property type="entry name" value="HUPs"/>
    <property type="match status" value="1"/>
</dbReference>
<dbReference type="Gene3D" id="1.10.240.10">
    <property type="entry name" value="Tyrosyl-Transfer RNA Synthetase"/>
    <property type="match status" value="1"/>
</dbReference>
<dbReference type="HAMAP" id="MF_00140_B">
    <property type="entry name" value="Trp_tRNA_synth_B"/>
    <property type="match status" value="1"/>
</dbReference>
<dbReference type="InterPro" id="IPR001412">
    <property type="entry name" value="aa-tRNA-synth_I_CS"/>
</dbReference>
<dbReference type="InterPro" id="IPR002305">
    <property type="entry name" value="aa-tRNA-synth_Ic"/>
</dbReference>
<dbReference type="InterPro" id="IPR014729">
    <property type="entry name" value="Rossmann-like_a/b/a_fold"/>
</dbReference>
<dbReference type="InterPro" id="IPR002306">
    <property type="entry name" value="Trp-tRNA-ligase"/>
</dbReference>
<dbReference type="InterPro" id="IPR024109">
    <property type="entry name" value="Trp-tRNA-ligase_bac-type"/>
</dbReference>
<dbReference type="InterPro" id="IPR050203">
    <property type="entry name" value="Trp-tRNA_synthetase"/>
</dbReference>
<dbReference type="NCBIfam" id="TIGR00233">
    <property type="entry name" value="trpS"/>
    <property type="match status" value="1"/>
</dbReference>
<dbReference type="PANTHER" id="PTHR43766">
    <property type="entry name" value="TRYPTOPHAN--TRNA LIGASE, MITOCHONDRIAL"/>
    <property type="match status" value="1"/>
</dbReference>
<dbReference type="PANTHER" id="PTHR43766:SF1">
    <property type="entry name" value="TRYPTOPHAN--TRNA LIGASE, MITOCHONDRIAL"/>
    <property type="match status" value="1"/>
</dbReference>
<dbReference type="Pfam" id="PF00579">
    <property type="entry name" value="tRNA-synt_1b"/>
    <property type="match status" value="1"/>
</dbReference>
<dbReference type="PRINTS" id="PR01039">
    <property type="entry name" value="TRNASYNTHTRP"/>
</dbReference>
<dbReference type="SUPFAM" id="SSF52374">
    <property type="entry name" value="Nucleotidylyl transferase"/>
    <property type="match status" value="1"/>
</dbReference>
<dbReference type="PROSITE" id="PS00178">
    <property type="entry name" value="AA_TRNA_LIGASE_I"/>
    <property type="match status" value="1"/>
</dbReference>
<protein>
    <recommendedName>
        <fullName evidence="1">Tryptophan--tRNA ligase</fullName>
        <ecNumber evidence="1">6.1.1.2</ecNumber>
    </recommendedName>
    <alternativeName>
        <fullName evidence="1">Tryptophanyl-tRNA synthetase</fullName>
        <shortName evidence="1">TrpRS</shortName>
    </alternativeName>
</protein>
<organism>
    <name type="scientific">Streptococcus pyogenes serotype M3 (strain SSI-1)</name>
    <dbReference type="NCBI Taxonomy" id="193567"/>
    <lineage>
        <taxon>Bacteria</taxon>
        <taxon>Bacillati</taxon>
        <taxon>Bacillota</taxon>
        <taxon>Bacilli</taxon>
        <taxon>Lactobacillales</taxon>
        <taxon>Streptococcaceae</taxon>
        <taxon>Streptococcus</taxon>
    </lineage>
</organism>
<accession>P0DG61</accession>
<accession>P67597</accession>
<accession>Q8NYZ2</accession>
<comment type="function">
    <text evidence="1">Catalyzes the attachment of tryptophan to tRNA(Trp).</text>
</comment>
<comment type="catalytic activity">
    <reaction evidence="1">
        <text>tRNA(Trp) + L-tryptophan + ATP = L-tryptophyl-tRNA(Trp) + AMP + diphosphate + H(+)</text>
        <dbReference type="Rhea" id="RHEA:24080"/>
        <dbReference type="Rhea" id="RHEA-COMP:9671"/>
        <dbReference type="Rhea" id="RHEA-COMP:9705"/>
        <dbReference type="ChEBI" id="CHEBI:15378"/>
        <dbReference type="ChEBI" id="CHEBI:30616"/>
        <dbReference type="ChEBI" id="CHEBI:33019"/>
        <dbReference type="ChEBI" id="CHEBI:57912"/>
        <dbReference type="ChEBI" id="CHEBI:78442"/>
        <dbReference type="ChEBI" id="CHEBI:78535"/>
        <dbReference type="ChEBI" id="CHEBI:456215"/>
        <dbReference type="EC" id="6.1.1.2"/>
    </reaction>
</comment>
<comment type="subunit">
    <text evidence="1">Homodimer.</text>
</comment>
<comment type="subcellular location">
    <subcellularLocation>
        <location evidence="1">Cytoplasm</location>
    </subcellularLocation>
</comment>
<comment type="similarity">
    <text evidence="1">Belongs to the class-I aminoacyl-tRNA synthetase family.</text>
</comment>
<comment type="sequence caution" evidence="2">
    <conflict type="erroneous initiation">
        <sequence resource="EMBL-CDS" id="BAC64949"/>
    </conflict>
</comment>